<keyword id="KW-0249">Electron transport</keyword>
<keyword id="KW-0349">Heme</keyword>
<keyword id="KW-0408">Iron</keyword>
<keyword id="KW-0472">Membrane</keyword>
<keyword id="KW-0479">Metal-binding</keyword>
<keyword id="KW-0496">Mitochondrion</keyword>
<keyword id="KW-0999">Mitochondrion inner membrane</keyword>
<keyword id="KW-0679">Respiratory chain</keyword>
<keyword id="KW-0812">Transmembrane</keyword>
<keyword id="KW-1133">Transmembrane helix</keyword>
<keyword id="KW-0813">Transport</keyword>
<keyword id="KW-0830">Ubiquinone</keyword>
<comment type="function">
    <text evidence="2">Component of the ubiquinol-cytochrome c reductase complex (complex III or cytochrome b-c1 complex) that is part of the mitochondrial respiratory chain. The b-c1 complex mediates electron transfer from ubiquinol to cytochrome c. Contributes to the generation of a proton gradient across the mitochondrial membrane that is then used for ATP synthesis.</text>
</comment>
<comment type="cofactor">
    <cofactor evidence="2">
        <name>heme b</name>
        <dbReference type="ChEBI" id="CHEBI:60344"/>
    </cofactor>
    <text evidence="2">Binds 2 heme b groups non-covalently.</text>
</comment>
<comment type="subunit">
    <text evidence="2">The cytochrome bc1 complex contains 3 respiratory subunits (MT-CYB, CYC1 and UQCRFS1), 2 core proteins (UQCRC1 and UQCRC2) and probably 6 low-molecular weight proteins.</text>
</comment>
<comment type="subcellular location">
    <subcellularLocation>
        <location evidence="2">Mitochondrion inner membrane</location>
        <topology evidence="2">Multi-pass membrane protein</topology>
    </subcellularLocation>
</comment>
<comment type="miscellaneous">
    <text evidence="1">Heme 1 (or BL or b562) is low-potential and absorbs at about 562 nm, and heme 2 (or BH or b566) is high-potential and absorbs at about 566 nm.</text>
</comment>
<comment type="similarity">
    <text evidence="3 4">Belongs to the cytochrome b family.</text>
</comment>
<comment type="caution">
    <text evidence="2">The full-length protein contains only eight transmembrane helices, not nine as predicted by bioinformatics tools.</text>
</comment>
<feature type="chain" id="PRO_0000060580" description="Cytochrome b">
    <location>
        <begin position="1"/>
        <end position="379"/>
    </location>
</feature>
<feature type="transmembrane region" description="Helical" evidence="2">
    <location>
        <begin position="33"/>
        <end position="53"/>
    </location>
</feature>
<feature type="transmembrane region" description="Helical" evidence="2">
    <location>
        <begin position="77"/>
        <end position="98"/>
    </location>
</feature>
<feature type="transmembrane region" description="Helical" evidence="2">
    <location>
        <begin position="113"/>
        <end position="133"/>
    </location>
</feature>
<feature type="transmembrane region" description="Helical" evidence="2">
    <location>
        <begin position="178"/>
        <end position="198"/>
    </location>
</feature>
<feature type="transmembrane region" description="Helical" evidence="2">
    <location>
        <begin position="226"/>
        <end position="246"/>
    </location>
</feature>
<feature type="transmembrane region" description="Helical" evidence="2">
    <location>
        <begin position="288"/>
        <end position="308"/>
    </location>
</feature>
<feature type="transmembrane region" description="Helical" evidence="2">
    <location>
        <begin position="320"/>
        <end position="340"/>
    </location>
</feature>
<feature type="transmembrane region" description="Helical" evidence="2">
    <location>
        <begin position="347"/>
        <end position="367"/>
    </location>
</feature>
<feature type="binding site" description="axial binding residue" evidence="2">
    <location>
        <position position="83"/>
    </location>
    <ligand>
        <name>heme b</name>
        <dbReference type="ChEBI" id="CHEBI:60344"/>
        <label>b562</label>
    </ligand>
    <ligandPart>
        <name>Fe</name>
        <dbReference type="ChEBI" id="CHEBI:18248"/>
    </ligandPart>
</feature>
<feature type="binding site" description="axial binding residue" evidence="2">
    <location>
        <position position="97"/>
    </location>
    <ligand>
        <name>heme b</name>
        <dbReference type="ChEBI" id="CHEBI:60344"/>
        <label>b566</label>
    </ligand>
    <ligandPart>
        <name>Fe</name>
        <dbReference type="ChEBI" id="CHEBI:18248"/>
    </ligandPart>
</feature>
<feature type="binding site" description="axial binding residue" evidence="2">
    <location>
        <position position="182"/>
    </location>
    <ligand>
        <name>heme b</name>
        <dbReference type="ChEBI" id="CHEBI:60344"/>
        <label>b562</label>
    </ligand>
    <ligandPart>
        <name>Fe</name>
        <dbReference type="ChEBI" id="CHEBI:18248"/>
    </ligandPart>
</feature>
<feature type="binding site" description="axial binding residue" evidence="2">
    <location>
        <position position="196"/>
    </location>
    <ligand>
        <name>heme b</name>
        <dbReference type="ChEBI" id="CHEBI:60344"/>
        <label>b566</label>
    </ligand>
    <ligandPart>
        <name>Fe</name>
        <dbReference type="ChEBI" id="CHEBI:18248"/>
    </ligandPart>
</feature>
<feature type="binding site" evidence="2">
    <location>
        <position position="201"/>
    </location>
    <ligand>
        <name>a ubiquinone</name>
        <dbReference type="ChEBI" id="CHEBI:16389"/>
    </ligand>
</feature>
<feature type="sequence variant">
    <original>D</original>
    <variation>N</variation>
    <location>
        <position position="158"/>
    </location>
</feature>
<proteinExistence type="inferred from homology"/>
<gene>
    <name type="primary">mt-cyb</name>
    <name type="synonym">cob</name>
    <name type="synonym">cytb</name>
    <name type="synonym">mtcyb</name>
</gene>
<evidence type="ECO:0000250" key="1"/>
<evidence type="ECO:0000250" key="2">
    <source>
        <dbReference type="UniProtKB" id="P00157"/>
    </source>
</evidence>
<evidence type="ECO:0000255" key="3">
    <source>
        <dbReference type="PROSITE-ProRule" id="PRU00967"/>
    </source>
</evidence>
<evidence type="ECO:0000255" key="4">
    <source>
        <dbReference type="PROSITE-ProRule" id="PRU00968"/>
    </source>
</evidence>
<organism>
    <name type="scientific">Anguilla marmorata</name>
    <name type="common">Giant mottled eel</name>
    <dbReference type="NCBI Taxonomy" id="7939"/>
    <lineage>
        <taxon>Eukaryota</taxon>
        <taxon>Metazoa</taxon>
        <taxon>Chordata</taxon>
        <taxon>Craniata</taxon>
        <taxon>Vertebrata</taxon>
        <taxon>Euteleostomi</taxon>
        <taxon>Actinopterygii</taxon>
        <taxon>Neopterygii</taxon>
        <taxon>Teleostei</taxon>
        <taxon>Anguilliformes</taxon>
        <taxon>Anguillidae</taxon>
        <taxon>Anguilla</taxon>
    </lineage>
</organism>
<geneLocation type="mitochondrion"/>
<sequence>MANLRKTHPLLKIANDALVDLPTPSNISAWWNFGSLLGLCLISQIITGLFLAMHYTSDISTAFSSVAHICRDVNYGWLIRNLHANGASFFFICLYLHIARGLYYGSYLYKETWNIGVVLFLLVMMTAFVGYVLPWGQMSFWGATVITNLLSAVPYVGDSLVQWIWGGFSVDNATLTRFFAFHFLFPFVVAGATMIHLLFLHETGSNNPVGLNSDADKIPFHPYFSYKDLLGFIIMLTALTMLALFYPNLLGDPDNFTPANPMVTPPHIKPEWYFLFAYAILRSIPNKLGGVLALLSSILVLMVVPILHTSKQRGLTFRPASQLLFWILVADMLVLTWIGGMPVEHPYIIIGQVASVLYFSLFLVLNPLVGWLENKMMNW</sequence>
<name>CYB_ANGMA</name>
<accession>P68534</accession>
<accession>Q9T4F1</accession>
<accession>Q9T5F6</accession>
<reference key="1">
    <citation type="thesis" date="1998" institute="Ocean Research Institute / University of Tokyo" country="Japan">
        <title>Molecular phylogeny and evolution of the freshwater eels, genus Anguilla.</title>
        <authorList>
            <person name="Aoyama J."/>
        </authorList>
    </citation>
    <scope>NUCLEOTIDE SEQUENCE [GENOMIC DNA]</scope>
    <source>
        <tissue>Liver</tissue>
    </source>
</reference>
<reference key="2">
    <citation type="journal article" date="2001" name="Mol. Phylogenet. Evol.">
        <title>A phylogeny of freshwater eels inferred from mitochondrial genes.</title>
        <authorList>
            <person name="Lin Y.S."/>
            <person name="Poh Y.P."/>
            <person name="Tzeng C.S."/>
        </authorList>
    </citation>
    <scope>NUCLEOTIDE SEQUENCE [GENOMIC DNA]</scope>
</reference>
<protein>
    <recommendedName>
        <fullName>Cytochrome b</fullName>
    </recommendedName>
    <alternativeName>
        <fullName>Complex III subunit 3</fullName>
    </alternativeName>
    <alternativeName>
        <fullName>Complex III subunit III</fullName>
    </alternativeName>
    <alternativeName>
        <fullName>Cytochrome b-c1 complex subunit 3</fullName>
    </alternativeName>
    <alternativeName>
        <fullName>Ubiquinol-cytochrome-c reductase complex cytochrome b subunit</fullName>
    </alternativeName>
</protein>
<dbReference type="EMBL" id="AB021778">
    <property type="protein sequence ID" value="BAB20301.1"/>
    <property type="molecule type" value="Genomic_DNA"/>
</dbReference>
<dbReference type="EMBL" id="AF006704">
    <property type="protein sequence ID" value="AAC98867.1"/>
    <property type="molecule type" value="Genomic_DNA"/>
</dbReference>
<dbReference type="EMBL" id="AF006705">
    <property type="protein sequence ID" value="AAC98868.1"/>
    <property type="molecule type" value="Genomic_DNA"/>
</dbReference>
<dbReference type="EMBL" id="AF074863">
    <property type="protein sequence ID" value="AAD13145.1"/>
    <property type="molecule type" value="Genomic_DNA"/>
</dbReference>
<dbReference type="RefSeq" id="YP_163945.1">
    <property type="nucleotide sequence ID" value="NC_006540.1"/>
</dbReference>
<dbReference type="SMR" id="P68534"/>
<dbReference type="GeneID" id="3190286"/>
<dbReference type="CTD" id="4519"/>
<dbReference type="GO" id="GO:0005743">
    <property type="term" value="C:mitochondrial inner membrane"/>
    <property type="evidence" value="ECO:0007669"/>
    <property type="project" value="UniProtKB-SubCell"/>
</dbReference>
<dbReference type="GO" id="GO:0045275">
    <property type="term" value="C:respiratory chain complex III"/>
    <property type="evidence" value="ECO:0007669"/>
    <property type="project" value="InterPro"/>
</dbReference>
<dbReference type="GO" id="GO:0046872">
    <property type="term" value="F:metal ion binding"/>
    <property type="evidence" value="ECO:0007669"/>
    <property type="project" value="UniProtKB-KW"/>
</dbReference>
<dbReference type="GO" id="GO:0008121">
    <property type="term" value="F:ubiquinol-cytochrome-c reductase activity"/>
    <property type="evidence" value="ECO:0007669"/>
    <property type="project" value="InterPro"/>
</dbReference>
<dbReference type="GO" id="GO:0006122">
    <property type="term" value="P:mitochondrial electron transport, ubiquinol to cytochrome c"/>
    <property type="evidence" value="ECO:0007669"/>
    <property type="project" value="TreeGrafter"/>
</dbReference>
<dbReference type="CDD" id="cd00290">
    <property type="entry name" value="cytochrome_b_C"/>
    <property type="match status" value="1"/>
</dbReference>
<dbReference type="CDD" id="cd00284">
    <property type="entry name" value="Cytochrome_b_N"/>
    <property type="match status" value="1"/>
</dbReference>
<dbReference type="FunFam" id="1.20.810.10:FF:000002">
    <property type="entry name" value="Cytochrome b"/>
    <property type="match status" value="1"/>
</dbReference>
<dbReference type="Gene3D" id="1.20.810.10">
    <property type="entry name" value="Cytochrome Bc1 Complex, Chain C"/>
    <property type="match status" value="1"/>
</dbReference>
<dbReference type="InterPro" id="IPR005798">
    <property type="entry name" value="Cyt_b/b6_C"/>
</dbReference>
<dbReference type="InterPro" id="IPR036150">
    <property type="entry name" value="Cyt_b/b6_C_sf"/>
</dbReference>
<dbReference type="InterPro" id="IPR005797">
    <property type="entry name" value="Cyt_b/b6_N"/>
</dbReference>
<dbReference type="InterPro" id="IPR027387">
    <property type="entry name" value="Cytb/b6-like_sf"/>
</dbReference>
<dbReference type="InterPro" id="IPR030689">
    <property type="entry name" value="Cytochrome_b"/>
</dbReference>
<dbReference type="InterPro" id="IPR048260">
    <property type="entry name" value="Cytochrome_b_C_euk/bac"/>
</dbReference>
<dbReference type="InterPro" id="IPR048259">
    <property type="entry name" value="Cytochrome_b_N_euk/bac"/>
</dbReference>
<dbReference type="InterPro" id="IPR016174">
    <property type="entry name" value="Di-haem_cyt_TM"/>
</dbReference>
<dbReference type="PANTHER" id="PTHR19271">
    <property type="entry name" value="CYTOCHROME B"/>
    <property type="match status" value="1"/>
</dbReference>
<dbReference type="PANTHER" id="PTHR19271:SF16">
    <property type="entry name" value="CYTOCHROME B"/>
    <property type="match status" value="1"/>
</dbReference>
<dbReference type="Pfam" id="PF00032">
    <property type="entry name" value="Cytochrom_B_C"/>
    <property type="match status" value="1"/>
</dbReference>
<dbReference type="Pfam" id="PF00033">
    <property type="entry name" value="Cytochrome_B"/>
    <property type="match status" value="1"/>
</dbReference>
<dbReference type="PIRSF" id="PIRSF038885">
    <property type="entry name" value="COB"/>
    <property type="match status" value="1"/>
</dbReference>
<dbReference type="SUPFAM" id="SSF81648">
    <property type="entry name" value="a domain/subunit of cytochrome bc1 complex (Ubiquinol-cytochrome c reductase)"/>
    <property type="match status" value="1"/>
</dbReference>
<dbReference type="SUPFAM" id="SSF81342">
    <property type="entry name" value="Transmembrane di-heme cytochromes"/>
    <property type="match status" value="1"/>
</dbReference>
<dbReference type="PROSITE" id="PS51003">
    <property type="entry name" value="CYTB_CTER"/>
    <property type="match status" value="1"/>
</dbReference>
<dbReference type="PROSITE" id="PS51002">
    <property type="entry name" value="CYTB_NTER"/>
    <property type="match status" value="1"/>
</dbReference>